<comment type="function">
    <text evidence="1">Functions in the biosynthesis of branched-chain amino acids. Catalyzes the dehydration of (2R,3R)-2,3-dihydroxy-3-methylpentanoate (2,3-dihydroxy-3-methylvalerate) into 2-oxo-3-methylpentanoate (2-oxo-3-methylvalerate) and of (2R)-2,3-dihydroxy-3-methylbutanoate (2,3-dihydroxyisovalerate) into 2-oxo-3-methylbutanoate (2-oxoisovalerate), the penultimate precursor to L-isoleucine and L-valine, respectively.</text>
</comment>
<comment type="catalytic activity">
    <reaction evidence="1">
        <text>(2R)-2,3-dihydroxy-3-methylbutanoate = 3-methyl-2-oxobutanoate + H2O</text>
        <dbReference type="Rhea" id="RHEA:24809"/>
        <dbReference type="ChEBI" id="CHEBI:11851"/>
        <dbReference type="ChEBI" id="CHEBI:15377"/>
        <dbReference type="ChEBI" id="CHEBI:49072"/>
        <dbReference type="EC" id="4.2.1.9"/>
    </reaction>
    <physiologicalReaction direction="left-to-right" evidence="1">
        <dbReference type="Rhea" id="RHEA:24810"/>
    </physiologicalReaction>
</comment>
<comment type="catalytic activity">
    <reaction evidence="1">
        <text>(2R,3R)-2,3-dihydroxy-3-methylpentanoate = (S)-3-methyl-2-oxopentanoate + H2O</text>
        <dbReference type="Rhea" id="RHEA:27694"/>
        <dbReference type="ChEBI" id="CHEBI:15377"/>
        <dbReference type="ChEBI" id="CHEBI:35146"/>
        <dbReference type="ChEBI" id="CHEBI:49258"/>
        <dbReference type="EC" id="4.2.1.9"/>
    </reaction>
    <physiologicalReaction direction="left-to-right" evidence="1">
        <dbReference type="Rhea" id="RHEA:27695"/>
    </physiologicalReaction>
</comment>
<comment type="cofactor">
    <cofactor evidence="1">
        <name>[2Fe-2S] cluster</name>
        <dbReference type="ChEBI" id="CHEBI:190135"/>
    </cofactor>
    <text evidence="1">Binds 1 [2Fe-2S] cluster per subunit. This cluster acts as a Lewis acid cofactor.</text>
</comment>
<comment type="cofactor">
    <cofactor evidence="1">
        <name>Mg(2+)</name>
        <dbReference type="ChEBI" id="CHEBI:18420"/>
    </cofactor>
</comment>
<comment type="pathway">
    <text evidence="1">Amino-acid biosynthesis; L-isoleucine biosynthesis; L-isoleucine from 2-oxobutanoate: step 3/4.</text>
</comment>
<comment type="pathway">
    <text evidence="1">Amino-acid biosynthesis; L-valine biosynthesis; L-valine from pyruvate: step 3/4.</text>
</comment>
<comment type="subunit">
    <text evidence="1">Homodimer.</text>
</comment>
<comment type="similarity">
    <text evidence="1">Belongs to the IlvD/Edd family.</text>
</comment>
<accession>Q2JTX6</accession>
<reference key="1">
    <citation type="journal article" date="2007" name="ISME J.">
        <title>Population level functional diversity in a microbial community revealed by comparative genomic and metagenomic analyses.</title>
        <authorList>
            <person name="Bhaya D."/>
            <person name="Grossman A.R."/>
            <person name="Steunou A.-S."/>
            <person name="Khuri N."/>
            <person name="Cohan F.M."/>
            <person name="Hamamura N."/>
            <person name="Melendrez M.C."/>
            <person name="Bateson M.M."/>
            <person name="Ward D.M."/>
            <person name="Heidelberg J.F."/>
        </authorList>
    </citation>
    <scope>NUCLEOTIDE SEQUENCE [LARGE SCALE GENOMIC DNA]</scope>
    <source>
        <strain>JA-3-3Ab</strain>
    </source>
</reference>
<protein>
    <recommendedName>
        <fullName evidence="1">Dihydroxy-acid dehydratase</fullName>
        <shortName evidence="1">DAD</shortName>
        <ecNumber evidence="1">4.2.1.9</ecNumber>
    </recommendedName>
</protein>
<evidence type="ECO:0000255" key="1">
    <source>
        <dbReference type="HAMAP-Rule" id="MF_00012"/>
    </source>
</evidence>
<name>ILVD_SYNJA</name>
<gene>
    <name evidence="1" type="primary">ilvD</name>
    <name type="ordered locus">CYA_1697</name>
</gene>
<proteinExistence type="inferred from homology"/>
<dbReference type="EC" id="4.2.1.9" evidence="1"/>
<dbReference type="EMBL" id="CP000239">
    <property type="protein sequence ID" value="ABC99853.1"/>
    <property type="molecule type" value="Genomic_DNA"/>
</dbReference>
<dbReference type="RefSeq" id="WP_011430529.1">
    <property type="nucleotide sequence ID" value="NC_007775.1"/>
</dbReference>
<dbReference type="SMR" id="Q2JTX6"/>
<dbReference type="STRING" id="321327.CYA_1697"/>
<dbReference type="KEGG" id="cya:CYA_1697"/>
<dbReference type="eggNOG" id="COG0129">
    <property type="taxonomic scope" value="Bacteria"/>
</dbReference>
<dbReference type="HOGENOM" id="CLU_014271_4_2_3"/>
<dbReference type="OrthoDB" id="9807077at2"/>
<dbReference type="UniPathway" id="UPA00047">
    <property type="reaction ID" value="UER00057"/>
</dbReference>
<dbReference type="UniPathway" id="UPA00049">
    <property type="reaction ID" value="UER00061"/>
</dbReference>
<dbReference type="Proteomes" id="UP000008818">
    <property type="component" value="Chromosome"/>
</dbReference>
<dbReference type="GO" id="GO:0051537">
    <property type="term" value="F:2 iron, 2 sulfur cluster binding"/>
    <property type="evidence" value="ECO:0007669"/>
    <property type="project" value="UniProtKB-UniRule"/>
</dbReference>
<dbReference type="GO" id="GO:0004160">
    <property type="term" value="F:dihydroxy-acid dehydratase activity"/>
    <property type="evidence" value="ECO:0007669"/>
    <property type="project" value="UniProtKB-UniRule"/>
</dbReference>
<dbReference type="GO" id="GO:0000287">
    <property type="term" value="F:magnesium ion binding"/>
    <property type="evidence" value="ECO:0007669"/>
    <property type="project" value="UniProtKB-UniRule"/>
</dbReference>
<dbReference type="GO" id="GO:0009097">
    <property type="term" value="P:isoleucine biosynthetic process"/>
    <property type="evidence" value="ECO:0007669"/>
    <property type="project" value="UniProtKB-UniRule"/>
</dbReference>
<dbReference type="GO" id="GO:0009099">
    <property type="term" value="P:L-valine biosynthetic process"/>
    <property type="evidence" value="ECO:0007669"/>
    <property type="project" value="UniProtKB-UniRule"/>
</dbReference>
<dbReference type="FunFam" id="3.50.30.80:FF:000001">
    <property type="entry name" value="Dihydroxy-acid dehydratase"/>
    <property type="match status" value="1"/>
</dbReference>
<dbReference type="Gene3D" id="3.50.30.80">
    <property type="entry name" value="IlvD/EDD C-terminal domain-like"/>
    <property type="match status" value="1"/>
</dbReference>
<dbReference type="HAMAP" id="MF_00012">
    <property type="entry name" value="IlvD"/>
    <property type="match status" value="1"/>
</dbReference>
<dbReference type="InterPro" id="IPR050165">
    <property type="entry name" value="DHAD_IlvD/Edd"/>
</dbReference>
<dbReference type="InterPro" id="IPR042096">
    <property type="entry name" value="Dihydro-acid_dehy_C"/>
</dbReference>
<dbReference type="InterPro" id="IPR004404">
    <property type="entry name" value="DihydroxyA_deHydtase"/>
</dbReference>
<dbReference type="InterPro" id="IPR020558">
    <property type="entry name" value="DiOHA_6PGluconate_deHydtase_CS"/>
</dbReference>
<dbReference type="InterPro" id="IPR056740">
    <property type="entry name" value="ILV_EDD_C"/>
</dbReference>
<dbReference type="InterPro" id="IPR000581">
    <property type="entry name" value="ILV_EDD_N"/>
</dbReference>
<dbReference type="InterPro" id="IPR037237">
    <property type="entry name" value="IlvD/EDD_N"/>
</dbReference>
<dbReference type="NCBIfam" id="TIGR00110">
    <property type="entry name" value="ilvD"/>
    <property type="match status" value="1"/>
</dbReference>
<dbReference type="NCBIfam" id="NF002068">
    <property type="entry name" value="PRK00911.1"/>
    <property type="match status" value="1"/>
</dbReference>
<dbReference type="PANTHER" id="PTHR21000">
    <property type="entry name" value="DIHYDROXY-ACID DEHYDRATASE DAD"/>
    <property type="match status" value="1"/>
</dbReference>
<dbReference type="PANTHER" id="PTHR21000:SF5">
    <property type="entry name" value="DIHYDROXY-ACID DEHYDRATASE, MITOCHONDRIAL"/>
    <property type="match status" value="1"/>
</dbReference>
<dbReference type="Pfam" id="PF24877">
    <property type="entry name" value="ILV_EDD_C"/>
    <property type="match status" value="1"/>
</dbReference>
<dbReference type="Pfam" id="PF00920">
    <property type="entry name" value="ILVD_EDD_N"/>
    <property type="match status" value="1"/>
</dbReference>
<dbReference type="SUPFAM" id="SSF143975">
    <property type="entry name" value="IlvD/EDD N-terminal domain-like"/>
    <property type="match status" value="1"/>
</dbReference>
<dbReference type="SUPFAM" id="SSF52016">
    <property type="entry name" value="LeuD/IlvD-like"/>
    <property type="match status" value="1"/>
</dbReference>
<dbReference type="PROSITE" id="PS00886">
    <property type="entry name" value="ILVD_EDD_1"/>
    <property type="match status" value="1"/>
</dbReference>
<dbReference type="PROSITE" id="PS00887">
    <property type="entry name" value="ILVD_EDD_2"/>
    <property type="match status" value="1"/>
</dbReference>
<keyword id="KW-0001">2Fe-2S</keyword>
<keyword id="KW-0028">Amino-acid biosynthesis</keyword>
<keyword id="KW-0100">Branched-chain amino acid biosynthesis</keyword>
<keyword id="KW-0408">Iron</keyword>
<keyword id="KW-0411">Iron-sulfur</keyword>
<keyword id="KW-0456">Lyase</keyword>
<keyword id="KW-0460">Magnesium</keyword>
<keyword id="KW-0479">Metal-binding</keyword>
<sequence length="565" mass="59620">MANPPFPLRSQVVTQGVQRSPNRAMLRAVGFRDEDFGKPIVGIANAHSTITPCNIGIQTLAERAEAALRAAGCMPQVFGTITISDGISMGTEGMKYSLVSREVIADSIETVVNGQSMDGLLAIGGCDKNMPGAMIAMARLNVPAIFVYGGTIKPGHYNGRDLTIVSAFEAVGEYSAGRISEDELLAVERHACPGAGSCGGMYTANTMSSAFEAMGMSLPYSSTMAAEDEEKAESAAQSAKVLAEAIQANIRPRDIITRQSIENAISVIMAVGGSTNAVLHFLAIAHAAEVPLTLDDFETIRARVPVLCDLKPSGRFVATDLHRAGGIPQVMKILLNHGLLHGDCLTISGQTIAEVLRDVPDEPSPDQEVIRPWHSPLYPQGHIAILKGNLAPEGAVAKISGVKTPKIAGPARVFNSEESCLQAILAGQIRPGDVVVIRYEGPKGGPGMREMLSPTSAIIGAGLGDSVGLITDGRFSGGTYGMVVGHVAPEAYVGGPIALVEEGDLITIDAPARLLHLHVSEEELARRRARWAPPEPRYKRGVLAKYAKLVSSSSLGAVTDLNLWD</sequence>
<feature type="chain" id="PRO_0000321609" description="Dihydroxy-acid dehydratase">
    <location>
        <begin position="1"/>
        <end position="565"/>
    </location>
</feature>
<feature type="active site" description="Proton acceptor" evidence="1">
    <location>
        <position position="476"/>
    </location>
</feature>
<feature type="binding site" evidence="1">
    <location>
        <position position="53"/>
    </location>
    <ligand>
        <name>[2Fe-2S] cluster</name>
        <dbReference type="ChEBI" id="CHEBI:190135"/>
    </ligand>
</feature>
<feature type="binding site" evidence="1">
    <location>
        <position position="85"/>
    </location>
    <ligand>
        <name>Mg(2+)</name>
        <dbReference type="ChEBI" id="CHEBI:18420"/>
    </ligand>
</feature>
<feature type="binding site" evidence="1">
    <location>
        <position position="126"/>
    </location>
    <ligand>
        <name>[2Fe-2S] cluster</name>
        <dbReference type="ChEBI" id="CHEBI:190135"/>
    </ligand>
</feature>
<feature type="binding site" evidence="1">
    <location>
        <position position="127"/>
    </location>
    <ligand>
        <name>Mg(2+)</name>
        <dbReference type="ChEBI" id="CHEBI:18420"/>
    </ligand>
</feature>
<feature type="binding site" description="via carbamate group" evidence="1">
    <location>
        <position position="128"/>
    </location>
    <ligand>
        <name>Mg(2+)</name>
        <dbReference type="ChEBI" id="CHEBI:18420"/>
    </ligand>
</feature>
<feature type="binding site" evidence="1">
    <location>
        <position position="198"/>
    </location>
    <ligand>
        <name>[2Fe-2S] cluster</name>
        <dbReference type="ChEBI" id="CHEBI:190135"/>
    </ligand>
</feature>
<feature type="binding site" evidence="1">
    <location>
        <position position="450"/>
    </location>
    <ligand>
        <name>Mg(2+)</name>
        <dbReference type="ChEBI" id="CHEBI:18420"/>
    </ligand>
</feature>
<feature type="modified residue" description="N6-carboxylysine" evidence="1">
    <location>
        <position position="128"/>
    </location>
</feature>
<organism>
    <name type="scientific">Synechococcus sp. (strain JA-3-3Ab)</name>
    <name type="common">Cyanobacteria bacterium Yellowstone A-Prime</name>
    <dbReference type="NCBI Taxonomy" id="321327"/>
    <lineage>
        <taxon>Bacteria</taxon>
        <taxon>Bacillati</taxon>
        <taxon>Cyanobacteriota</taxon>
        <taxon>Cyanophyceae</taxon>
        <taxon>Synechococcales</taxon>
        <taxon>Synechococcaceae</taxon>
        <taxon>Synechococcus</taxon>
    </lineage>
</organism>